<sequence>MSVEQEVINLGKNIFFNAHHSPMGCSPVFTLGYPGQSGGFDLELGSPPNQNIYIGLQDDGQERYRAFPFFGEGLDERDRYTTDESDSGSSERHSVQQEESGLIIPYNRDEIVRRFGAAIDEWQAGDLTFRLISPFEGVPDPETATEEQLRFALMPAVLAEITVDNTRGTSTRKAFFGLQNNDPVSAIRRLEDVTGGRICGIGQGRHTAIARAIRDYQRRIFYDGIDSQAKGSGKPPVWPWSGRAVLMDTPAGEKATYRFGLCFYRPVRHNRNRCSYYYSRYFANIEEVAEYALAQFNRKLEVARQADALVNDAKLSEDQKFIVAHAIRSYYGSTELLEHDGKPLWIVNEGEYRMMNTFDLLVDQLFYELKMNPWTVKNELDLYTSRYSYRDTVDFPGDATEYPGGISFTHDMGVANSFSLPGYSSYELHAIDDCFSHMTHEQLVNWVLSATVYVHQTNDREWLEPQPADSGASLDSMVNRDHPDPSQRTGMMGLDSSRTMGGRKSPPIQPGRLVGASAEQHLFAGKSWAAYVAMEKLFRDNGRKSAAALAGRQPELGAGTITSHLLPGGIFQPSFRRTMTPRSSLRSRVLSSRYTPDAKKRWIQTADSVHILRRCPRI</sequence>
<evidence type="ECO:0000255" key="1"/>
<evidence type="ECO:0000256" key="2">
    <source>
        <dbReference type="SAM" id="MobiDB-lite"/>
    </source>
</evidence>
<evidence type="ECO:0000305" key="3"/>
<name>XYLA2_GEOSE</name>
<protein>
    <recommendedName>
        <fullName>Beta-xylosidase</fullName>
        <ecNumber>3.2.1.37</ecNumber>
    </recommendedName>
    <alternativeName>
        <fullName>1,4-beta-D-xylan xylohydrolase</fullName>
    </alternativeName>
    <alternativeName>
        <fullName>Xylan 1,4-beta-xylosidase</fullName>
    </alternativeName>
</protein>
<gene>
    <name type="primary">xylA</name>
</gene>
<comment type="catalytic activity">
    <reaction>
        <text>Hydrolysis of (1-&gt;4)-beta-D-xylans, to remove successive D-xylose residues from the non-reducing termini.</text>
        <dbReference type="EC" id="3.2.1.37"/>
    </reaction>
</comment>
<comment type="pathway">
    <text>Glycan degradation; xylan degradation.</text>
</comment>
<comment type="subcellular location">
    <subcellularLocation>
        <location>Secreted</location>
    </subcellularLocation>
</comment>
<comment type="similarity">
    <text evidence="3">Belongs to the glycosyl hydrolase 52 family.</text>
</comment>
<accession>P45704</accession>
<proteinExistence type="inferred from homology"/>
<keyword id="KW-0119">Carbohydrate metabolism</keyword>
<keyword id="KW-0326">Glycosidase</keyword>
<keyword id="KW-0378">Hydrolase</keyword>
<keyword id="KW-0624">Polysaccharide degradation</keyword>
<keyword id="KW-0964">Secreted</keyword>
<keyword id="KW-0732">Signal</keyword>
<keyword id="KW-0858">Xylan degradation</keyword>
<dbReference type="EC" id="3.2.1.37"/>
<dbReference type="EMBL" id="U15984">
    <property type="protein sequence ID" value="AAA50863.1"/>
    <property type="molecule type" value="Genomic_DNA"/>
</dbReference>
<dbReference type="SMR" id="P45704"/>
<dbReference type="CAZy" id="GH52">
    <property type="family name" value="Glycoside Hydrolase Family 52"/>
</dbReference>
<dbReference type="UniPathway" id="UPA00114"/>
<dbReference type="GO" id="GO:0005576">
    <property type="term" value="C:extracellular region"/>
    <property type="evidence" value="ECO:0007669"/>
    <property type="project" value="UniProtKB-SubCell"/>
</dbReference>
<dbReference type="GO" id="GO:0009044">
    <property type="term" value="F:xylan 1,4-beta-xylosidase activity"/>
    <property type="evidence" value="ECO:0007669"/>
    <property type="project" value="UniProtKB-EC"/>
</dbReference>
<dbReference type="GO" id="GO:0045493">
    <property type="term" value="P:xylan catabolic process"/>
    <property type="evidence" value="ECO:0007669"/>
    <property type="project" value="UniProtKB-UniPathway"/>
</dbReference>
<dbReference type="InterPro" id="IPR000852">
    <property type="entry name" value="Glyco_hydro_52"/>
</dbReference>
<dbReference type="Pfam" id="PF03512">
    <property type="entry name" value="Glyco_hydro_52"/>
    <property type="match status" value="1"/>
</dbReference>
<dbReference type="PRINTS" id="PR00845">
    <property type="entry name" value="GLHYDRLASE52"/>
</dbReference>
<reference key="1">
    <citation type="journal article" date="1994" name="Korean J. Appl. Microbiol. Biotechnol.">
        <title>Sequence analysis of B-xylosidase gene from Bacillus stearothermophilus.</title>
        <authorList>
            <person name="Oh H."/>
            <person name="Choi Y."/>
        </authorList>
    </citation>
    <scope>NUCLEOTIDE SEQUENCE [GENOMIC DNA]</scope>
    <source>
        <strain>No. 236</strain>
    </source>
</reference>
<feature type="signal peptide" evidence="1">
    <location>
        <begin position="1"/>
        <end status="unknown"/>
    </location>
</feature>
<feature type="chain" id="PRO_0000012219" description="Beta-xylosidase">
    <location>
        <begin status="unknown"/>
        <end position="618"/>
    </location>
</feature>
<feature type="region of interest" description="Disordered" evidence="2">
    <location>
        <begin position="76"/>
        <end position="100"/>
    </location>
</feature>
<feature type="region of interest" description="Disordered" evidence="2">
    <location>
        <begin position="463"/>
        <end position="509"/>
    </location>
</feature>
<organism>
    <name type="scientific">Geobacillus stearothermophilus</name>
    <name type="common">Bacillus stearothermophilus</name>
    <dbReference type="NCBI Taxonomy" id="1422"/>
    <lineage>
        <taxon>Bacteria</taxon>
        <taxon>Bacillati</taxon>
        <taxon>Bacillota</taxon>
        <taxon>Bacilli</taxon>
        <taxon>Bacillales</taxon>
        <taxon>Anoxybacillaceae</taxon>
        <taxon>Geobacillus</taxon>
    </lineage>
</organism>